<reference key="1">
    <citation type="journal article" date="2011" name="J. Bacteriol.">
        <title>Comparative genomics of 28 Salmonella enterica isolates: evidence for CRISPR-mediated adaptive sublineage evolution.</title>
        <authorList>
            <person name="Fricke W.F."/>
            <person name="Mammel M.K."/>
            <person name="McDermott P.F."/>
            <person name="Tartera C."/>
            <person name="White D.G."/>
            <person name="Leclerc J.E."/>
            <person name="Ravel J."/>
            <person name="Cebula T.A."/>
        </authorList>
    </citation>
    <scope>NUCLEOTIDE SEQUENCE [LARGE SCALE GENOMIC DNA]</scope>
    <source>
        <strain>CT_02021853</strain>
    </source>
</reference>
<sequence>MANPLYQKHIISINDLSRDDLNLVLATAAKLKANPQPELLKHKVIASCFFEASTRTRLSFETSMHRLSASVVGFSDSANTSLGKKGETLADTISVISTYVDAIVMRHPQEGAARLATEFSGQVPVLNAGDGSNQHPTQTLLDLFTIQETQGRLDNLHIAMVGDLKYGRTVHSLTQALAKFSGNRFYFIAPDALAMPQYILDMLDEKGMAWSLHGSIEEVMADVDILYMTRVQKERLDPSEYANVKAQFVLRASDLNGARENMKVLHPLPRIDEITTDVDKTPHAWYFQQAGNGIFARQALLALVLNSELSL</sequence>
<evidence type="ECO:0000255" key="1">
    <source>
        <dbReference type="HAMAP-Rule" id="MF_00001"/>
    </source>
</evidence>
<feature type="chain" id="PRO_1000088795" description="Aspartate carbamoyltransferase catalytic subunit">
    <location>
        <begin position="1"/>
        <end position="311"/>
    </location>
</feature>
<feature type="binding site" evidence="1">
    <location>
        <position position="55"/>
    </location>
    <ligand>
        <name>carbamoyl phosphate</name>
        <dbReference type="ChEBI" id="CHEBI:58228"/>
    </ligand>
</feature>
<feature type="binding site" evidence="1">
    <location>
        <position position="56"/>
    </location>
    <ligand>
        <name>carbamoyl phosphate</name>
        <dbReference type="ChEBI" id="CHEBI:58228"/>
    </ligand>
</feature>
<feature type="binding site" evidence="1">
    <location>
        <position position="85"/>
    </location>
    <ligand>
        <name>L-aspartate</name>
        <dbReference type="ChEBI" id="CHEBI:29991"/>
    </ligand>
</feature>
<feature type="binding site" evidence="1">
    <location>
        <position position="106"/>
    </location>
    <ligand>
        <name>carbamoyl phosphate</name>
        <dbReference type="ChEBI" id="CHEBI:58228"/>
    </ligand>
</feature>
<feature type="binding site" evidence="1">
    <location>
        <position position="135"/>
    </location>
    <ligand>
        <name>carbamoyl phosphate</name>
        <dbReference type="ChEBI" id="CHEBI:58228"/>
    </ligand>
</feature>
<feature type="binding site" evidence="1">
    <location>
        <position position="138"/>
    </location>
    <ligand>
        <name>carbamoyl phosphate</name>
        <dbReference type="ChEBI" id="CHEBI:58228"/>
    </ligand>
</feature>
<feature type="binding site" evidence="1">
    <location>
        <position position="168"/>
    </location>
    <ligand>
        <name>L-aspartate</name>
        <dbReference type="ChEBI" id="CHEBI:29991"/>
    </ligand>
</feature>
<feature type="binding site" evidence="1">
    <location>
        <position position="230"/>
    </location>
    <ligand>
        <name>L-aspartate</name>
        <dbReference type="ChEBI" id="CHEBI:29991"/>
    </ligand>
</feature>
<feature type="binding site" evidence="1">
    <location>
        <position position="268"/>
    </location>
    <ligand>
        <name>carbamoyl phosphate</name>
        <dbReference type="ChEBI" id="CHEBI:58228"/>
    </ligand>
</feature>
<feature type="binding site" evidence="1">
    <location>
        <position position="269"/>
    </location>
    <ligand>
        <name>carbamoyl phosphate</name>
        <dbReference type="ChEBI" id="CHEBI:58228"/>
    </ligand>
</feature>
<protein>
    <recommendedName>
        <fullName evidence="1">Aspartate carbamoyltransferase catalytic subunit</fullName>
        <ecNumber evidence="1">2.1.3.2</ecNumber>
    </recommendedName>
    <alternativeName>
        <fullName evidence="1">Aspartate transcarbamylase</fullName>
        <shortName evidence="1">ATCase</shortName>
    </alternativeName>
</protein>
<proteinExistence type="inferred from homology"/>
<organism>
    <name type="scientific">Salmonella dublin (strain CT_02021853)</name>
    <dbReference type="NCBI Taxonomy" id="439851"/>
    <lineage>
        <taxon>Bacteria</taxon>
        <taxon>Pseudomonadati</taxon>
        <taxon>Pseudomonadota</taxon>
        <taxon>Gammaproteobacteria</taxon>
        <taxon>Enterobacterales</taxon>
        <taxon>Enterobacteriaceae</taxon>
        <taxon>Salmonella</taxon>
    </lineage>
</organism>
<dbReference type="EC" id="2.1.3.2" evidence="1"/>
<dbReference type="EMBL" id="CP001144">
    <property type="protein sequence ID" value="ACH76816.1"/>
    <property type="molecule type" value="Genomic_DNA"/>
</dbReference>
<dbReference type="RefSeq" id="WP_000013060.1">
    <property type="nucleotide sequence ID" value="NC_011205.1"/>
</dbReference>
<dbReference type="SMR" id="B5FSF3"/>
<dbReference type="KEGG" id="sed:SeD_A4842"/>
<dbReference type="HOGENOM" id="CLU_043846_1_2_6"/>
<dbReference type="UniPathway" id="UPA00070">
    <property type="reaction ID" value="UER00116"/>
</dbReference>
<dbReference type="Proteomes" id="UP000008322">
    <property type="component" value="Chromosome"/>
</dbReference>
<dbReference type="GO" id="GO:0005829">
    <property type="term" value="C:cytosol"/>
    <property type="evidence" value="ECO:0007669"/>
    <property type="project" value="TreeGrafter"/>
</dbReference>
<dbReference type="GO" id="GO:0016597">
    <property type="term" value="F:amino acid binding"/>
    <property type="evidence" value="ECO:0007669"/>
    <property type="project" value="InterPro"/>
</dbReference>
<dbReference type="GO" id="GO:0004070">
    <property type="term" value="F:aspartate carbamoyltransferase activity"/>
    <property type="evidence" value="ECO:0007669"/>
    <property type="project" value="UniProtKB-UniRule"/>
</dbReference>
<dbReference type="GO" id="GO:0006207">
    <property type="term" value="P:'de novo' pyrimidine nucleobase biosynthetic process"/>
    <property type="evidence" value="ECO:0007669"/>
    <property type="project" value="InterPro"/>
</dbReference>
<dbReference type="GO" id="GO:0044205">
    <property type="term" value="P:'de novo' UMP biosynthetic process"/>
    <property type="evidence" value="ECO:0007669"/>
    <property type="project" value="UniProtKB-UniRule"/>
</dbReference>
<dbReference type="GO" id="GO:0006520">
    <property type="term" value="P:amino acid metabolic process"/>
    <property type="evidence" value="ECO:0007669"/>
    <property type="project" value="InterPro"/>
</dbReference>
<dbReference type="FunFam" id="3.40.50.1370:FF:000001">
    <property type="entry name" value="Aspartate carbamoyltransferase"/>
    <property type="match status" value="1"/>
</dbReference>
<dbReference type="FunFam" id="3.40.50.1370:FF:000002">
    <property type="entry name" value="Aspartate carbamoyltransferase 2"/>
    <property type="match status" value="1"/>
</dbReference>
<dbReference type="Gene3D" id="3.40.50.1370">
    <property type="entry name" value="Aspartate/ornithine carbamoyltransferase"/>
    <property type="match status" value="2"/>
</dbReference>
<dbReference type="HAMAP" id="MF_00001">
    <property type="entry name" value="Asp_carb_tr"/>
    <property type="match status" value="1"/>
</dbReference>
<dbReference type="InterPro" id="IPR006132">
    <property type="entry name" value="Asp/Orn_carbamoyltranf_P-bd"/>
</dbReference>
<dbReference type="InterPro" id="IPR006130">
    <property type="entry name" value="Asp/Orn_carbamoylTrfase"/>
</dbReference>
<dbReference type="InterPro" id="IPR036901">
    <property type="entry name" value="Asp/Orn_carbamoylTrfase_sf"/>
</dbReference>
<dbReference type="InterPro" id="IPR002082">
    <property type="entry name" value="Asp_carbamoyltransf"/>
</dbReference>
<dbReference type="InterPro" id="IPR006131">
    <property type="entry name" value="Asp_carbamoyltransf_Asp/Orn-bd"/>
</dbReference>
<dbReference type="NCBIfam" id="TIGR00670">
    <property type="entry name" value="asp_carb_tr"/>
    <property type="match status" value="1"/>
</dbReference>
<dbReference type="NCBIfam" id="NF002032">
    <property type="entry name" value="PRK00856.1"/>
    <property type="match status" value="1"/>
</dbReference>
<dbReference type="PANTHER" id="PTHR45753:SF6">
    <property type="entry name" value="ASPARTATE CARBAMOYLTRANSFERASE"/>
    <property type="match status" value="1"/>
</dbReference>
<dbReference type="PANTHER" id="PTHR45753">
    <property type="entry name" value="ORNITHINE CARBAMOYLTRANSFERASE, MITOCHONDRIAL"/>
    <property type="match status" value="1"/>
</dbReference>
<dbReference type="Pfam" id="PF00185">
    <property type="entry name" value="OTCace"/>
    <property type="match status" value="1"/>
</dbReference>
<dbReference type="Pfam" id="PF02729">
    <property type="entry name" value="OTCace_N"/>
    <property type="match status" value="1"/>
</dbReference>
<dbReference type="PRINTS" id="PR00100">
    <property type="entry name" value="AOTCASE"/>
</dbReference>
<dbReference type="PRINTS" id="PR00101">
    <property type="entry name" value="ATCASE"/>
</dbReference>
<dbReference type="SUPFAM" id="SSF53671">
    <property type="entry name" value="Aspartate/ornithine carbamoyltransferase"/>
    <property type="match status" value="1"/>
</dbReference>
<dbReference type="PROSITE" id="PS00097">
    <property type="entry name" value="CARBAMOYLTRANSFERASE"/>
    <property type="match status" value="1"/>
</dbReference>
<name>PYRB_SALDC</name>
<comment type="function">
    <text evidence="1">Catalyzes the condensation of carbamoyl phosphate and aspartate to form carbamoyl aspartate and inorganic phosphate, the committed step in the de novo pyrimidine nucleotide biosynthesis pathway.</text>
</comment>
<comment type="catalytic activity">
    <reaction evidence="1">
        <text>carbamoyl phosphate + L-aspartate = N-carbamoyl-L-aspartate + phosphate + H(+)</text>
        <dbReference type="Rhea" id="RHEA:20013"/>
        <dbReference type="ChEBI" id="CHEBI:15378"/>
        <dbReference type="ChEBI" id="CHEBI:29991"/>
        <dbReference type="ChEBI" id="CHEBI:32814"/>
        <dbReference type="ChEBI" id="CHEBI:43474"/>
        <dbReference type="ChEBI" id="CHEBI:58228"/>
        <dbReference type="EC" id="2.1.3.2"/>
    </reaction>
</comment>
<comment type="pathway">
    <text evidence="1">Pyrimidine metabolism; UMP biosynthesis via de novo pathway; (S)-dihydroorotate from bicarbonate: step 2/3.</text>
</comment>
<comment type="subunit">
    <text evidence="1">Heterododecamer (2C3:3R2) of six catalytic PyrB chains organized as two trimers (C3), and six regulatory PyrI chains organized as three dimers (R2).</text>
</comment>
<comment type="similarity">
    <text evidence="1">Belongs to the aspartate/ornithine carbamoyltransferase superfamily. ATCase family.</text>
</comment>
<gene>
    <name evidence="1" type="primary">pyrB</name>
    <name type="ordered locus">SeD_A4842</name>
</gene>
<accession>B5FSF3</accession>
<keyword id="KW-0665">Pyrimidine biosynthesis</keyword>
<keyword id="KW-0808">Transferase</keyword>